<comment type="function">
    <text evidence="6">Functions as an interleukin receptor which binds interleukin-12 with low affinity and is involved in IL12 transduction. Associated with IL12RB2 it forms a functional, high affinity receptor for IL12. Also associates with IL23R to form the interleukin-23 receptor which functions in IL23 signal transduction probably through activation of the Jak-Stat signaling cascade.</text>
</comment>
<comment type="subunit">
    <text evidence="6 8">Dimer or oligomer; disulfide-linked. Interacts with IL12RB2 to form the high affinity IL12 receptor. Heterodimer with IL23R; in presence of IL23. The heterodimer forms the IL23 receptor.</text>
</comment>
<comment type="subcellular location">
    <subcellularLocation>
        <location>Membrane</location>
        <topology>Single-pass type I membrane protein</topology>
    </subcellularLocation>
</comment>
<comment type="alternative products">
    <event type="alternative splicing"/>
    <isoform>
        <id>P42701-1</id>
        <name>1</name>
        <name>Long</name>
        <sequence type="displayed"/>
    </isoform>
    <isoform>
        <id>P42701-2</id>
        <name>2</name>
        <name>Short</name>
        <sequence type="described" ref="VSP_001715"/>
    </isoform>
    <isoform>
        <id>P42701-3</id>
        <name>3</name>
        <sequence type="described" ref="VSP_037043 VSP_037044"/>
    </isoform>
</comment>
<comment type="domain">
    <text>The WSXWS motif appears to be necessary for proper protein folding and thereby efficient intracellular transport and cell-surface receptor binding.</text>
</comment>
<comment type="domain">
    <text>The box 1 motif is required for JAK interaction and/or activation.</text>
</comment>
<comment type="disease" evidence="5">
    <disease id="DI-04223">
        <name>Immunodeficiency 30</name>
        <acronym>IMD30</acronym>
        <description>A form of Mendelian susceptibility to mycobacterial disease, a rare condition caused by impairment of interferon-gamma mediated immunity. It is characterized by predisposition to illness caused by moderately virulent mycobacterial species, such as Bacillus Calmette-Guerin (BCG) vaccine, environmental non-tuberculous mycobacteria, and by the more virulent Mycobacterium tuberculosis. Other microorganisms rarely cause severe clinical disease in individuals with susceptibility to mycobacterial infections, with the exception of Salmonella which infects less than 50% of these individuals. Clinical outcome severity depends on the degree of impairment of interferon-gamma mediated immunity. Some patients die of overwhelming mycobacterial disease with lepromatous-like lesions in early childhood, whereas others develop, later in life, disseminated but curable infections with tuberculoid granulomas. IMD30 has low penetrance, and affected individuals have relatively mild disease and good prognosis. BCG disease and salmonellosis are the most frequent infections in IMD30 patients.</description>
        <dbReference type="MIM" id="614891"/>
    </disease>
    <text>The disease is caused by variants affecting the gene represented in this entry.</text>
</comment>
<comment type="similarity">
    <text evidence="13">Belongs to the type I cytokine receptor family. Type 2 subfamily.</text>
</comment>
<comment type="online information" name="IL12RB1base">
    <link uri="https://databases.lovd.nl/shared/genes/IL12RB1"/>
    <text>IL12RB1 mutation db</text>
</comment>
<feature type="signal peptide" evidence="2">
    <location>
        <begin position="1"/>
        <end position="23"/>
    </location>
</feature>
<feature type="chain" id="PRO_0000010917" description="Interleukin-12 receptor subunit beta-1">
    <location>
        <begin position="24"/>
        <end position="662"/>
    </location>
</feature>
<feature type="topological domain" description="Extracellular" evidence="2">
    <location>
        <begin position="24"/>
        <end position="545"/>
    </location>
</feature>
<feature type="transmembrane region" description="Helical" evidence="2">
    <location>
        <begin position="546"/>
        <end position="570"/>
    </location>
</feature>
<feature type="topological domain" description="Cytoplasmic" evidence="2">
    <location>
        <begin position="571"/>
        <end position="662"/>
    </location>
</feature>
<feature type="domain" description="Fibronectin type-III 1" evidence="3">
    <location>
        <begin position="46"/>
        <end position="136"/>
    </location>
</feature>
<feature type="domain" description="Fibronectin type-III 2" evidence="3">
    <location>
        <begin position="142"/>
        <end position="234"/>
    </location>
</feature>
<feature type="domain" description="Fibronectin type-III 3" evidence="3">
    <location>
        <begin position="237"/>
        <end position="337"/>
    </location>
</feature>
<feature type="domain" description="Fibronectin type-III 4" evidence="3">
    <location>
        <begin position="338"/>
        <end position="444"/>
    </location>
</feature>
<feature type="domain" description="Fibronectin type-III 5" evidence="3">
    <location>
        <begin position="448"/>
        <end position="542"/>
    </location>
</feature>
<feature type="region of interest" description="Disordered" evidence="4">
    <location>
        <begin position="626"/>
        <end position="648"/>
    </location>
</feature>
<feature type="short sequence motif" description="WSXWS motif">
    <location>
        <begin position="222"/>
        <end position="226"/>
    </location>
</feature>
<feature type="short sequence motif" description="Box 1 motif">
    <location>
        <begin position="577"/>
        <end position="585"/>
    </location>
</feature>
<feature type="compositionally biased region" description="Basic and acidic residues" evidence="4">
    <location>
        <begin position="626"/>
        <end position="637"/>
    </location>
</feature>
<feature type="glycosylation site" description="N-linked (GlcNAc...) asparagine" evidence="2">
    <location>
        <position position="121"/>
    </location>
</feature>
<feature type="glycosylation site" description="N-linked (GlcNAc...) asparagine" evidence="2">
    <location>
        <position position="329"/>
    </location>
</feature>
<feature type="glycosylation site" description="N-linked (GlcNAc...) asparagine" evidence="2">
    <location>
        <position position="346"/>
    </location>
</feature>
<feature type="glycosylation site" description="N-linked (GlcNAc...) asparagine" evidence="2">
    <location>
        <position position="352"/>
    </location>
</feature>
<feature type="glycosylation site" description="N-linked (GlcNAc...) asparagine" evidence="2">
    <location>
        <position position="442"/>
    </location>
</feature>
<feature type="glycosylation site" description="N-linked (GlcNAc...) asparagine" evidence="2">
    <location>
        <position position="456"/>
    </location>
</feature>
<feature type="disulfide bond" evidence="1">
    <location>
        <begin position="52"/>
        <end position="62"/>
    </location>
</feature>
<feature type="splice variant" id="VSP_037043" description="In isoform 3." evidence="10 11">
    <original>EPVALNISVGTNGTTMYWPARAQSMTYCIEWQPVGQDGGLATCSLTAPQDPDPAGMATYSWSRESGAMGQEKCYYITIFASA</original>
    <variation>DGMISAHCNLRLPDSRDSPASASRVAGITGICHHTRLILYF</variation>
    <location>
        <begin position="341"/>
        <end position="422"/>
    </location>
</feature>
<feature type="splice variant" id="VSP_037044" description="In isoform 3." evidence="10 11">
    <location>
        <begin position="423"/>
        <end position="662"/>
    </location>
</feature>
<feature type="splice variant" id="VSP_001715" description="In isoform 2." evidence="11 12">
    <original>KAKM</original>
    <variation>DR</variation>
    <location>
        <begin position="659"/>
        <end position="662"/>
    </location>
</feature>
<feature type="sequence variant" id="VAR_021281" description="In dbSNP:rs17884651." evidence="9">
    <original>P</original>
    <variation>Q</variation>
    <location>
        <position position="3"/>
    </location>
</feature>
<feature type="sequence variant" id="VAR_021282" description="In dbSNP:rs17887176." evidence="9">
    <original>P</original>
    <variation>S</variation>
    <location>
        <position position="47"/>
    </location>
</feature>
<feature type="sequence variant" id="VAR_021283" description="In dbSNP:rs11575926." evidence="9">
    <original>R</original>
    <variation>H</variation>
    <location>
        <position position="156"/>
    </location>
</feature>
<feature type="sequence variant" id="VAR_015577" description="In IMD30; dbSNP:rs121434494." evidence="5">
    <original>R</original>
    <variation>W</variation>
    <location>
        <position position="213"/>
    </location>
</feature>
<feature type="sequence variant" id="VAR_021284" description="In dbSNP:rs11575934." evidence="7 9">
    <original>Q</original>
    <variation>R</variation>
    <location>
        <position position="214"/>
    </location>
</feature>
<feature type="sequence variant" id="VAR_021285" description="In dbSNP:rs17884957." evidence="9">
    <original>H</original>
    <variation>Q</variation>
    <location>
        <position position="339"/>
    </location>
</feature>
<feature type="sequence variant" id="VAR_011986" description="In dbSNP:rs375947." evidence="9">
    <original>M</original>
    <variation>T</variation>
    <location>
        <position position="365"/>
    </location>
</feature>
<feature type="sequence variant" id="VAR_011987" description="In dbSNP:rs401502." evidence="9">
    <original>G</original>
    <variation>R</variation>
    <location>
        <position position="378"/>
    </location>
</feature>
<feature type="strand" evidence="14">
    <location>
        <begin position="46"/>
        <end position="54"/>
    </location>
</feature>
<feature type="strand" evidence="14">
    <location>
        <begin position="56"/>
        <end position="68"/>
    </location>
</feature>
<feature type="strand" evidence="14">
    <location>
        <begin position="74"/>
        <end position="80"/>
    </location>
</feature>
<feature type="strand" evidence="14">
    <location>
        <begin position="86"/>
        <end position="92"/>
    </location>
</feature>
<feature type="strand" evidence="14">
    <location>
        <begin position="95"/>
        <end position="100"/>
    </location>
</feature>
<feature type="strand" evidence="14">
    <location>
        <begin position="107"/>
        <end position="119"/>
    </location>
</feature>
<feature type="strand" evidence="14">
    <location>
        <begin position="122"/>
        <end position="125"/>
    </location>
</feature>
<feature type="strand" evidence="14">
    <location>
        <begin position="129"/>
        <end position="132"/>
    </location>
</feature>
<feature type="helix" evidence="14">
    <location>
        <begin position="133"/>
        <end position="135"/>
    </location>
</feature>
<feature type="strand" evidence="14">
    <location>
        <begin position="147"/>
        <end position="151"/>
    </location>
</feature>
<feature type="strand" evidence="14">
    <location>
        <begin position="154"/>
        <end position="160"/>
    </location>
</feature>
<feature type="strand" evidence="14">
    <location>
        <begin position="167"/>
        <end position="175"/>
    </location>
</feature>
<feature type="strand" evidence="14">
    <location>
        <begin position="177"/>
        <end position="179"/>
    </location>
</feature>
<feature type="strand" evidence="14">
    <location>
        <begin position="182"/>
        <end position="189"/>
    </location>
</feature>
<feature type="strand" evidence="14">
    <location>
        <begin position="191"/>
        <end position="199"/>
    </location>
</feature>
<feature type="strand" evidence="14">
    <location>
        <begin position="206"/>
        <end position="214"/>
    </location>
</feature>
<feature type="strand" evidence="14">
    <location>
        <begin position="216"/>
        <end position="218"/>
    </location>
</feature>
<feature type="strand" evidence="14">
    <location>
        <begin position="229"/>
        <end position="231"/>
    </location>
</feature>
<feature type="strand" evidence="15">
    <location>
        <begin position="241"/>
        <end position="245"/>
    </location>
</feature>
<feature type="strand" evidence="15">
    <location>
        <begin position="254"/>
        <end position="260"/>
    </location>
</feature>
<feature type="strand" evidence="15">
    <location>
        <begin position="282"/>
        <end position="288"/>
    </location>
</feature>
<feature type="strand" evidence="15">
    <location>
        <begin position="298"/>
        <end position="301"/>
    </location>
</feature>
<feature type="strand" evidence="15">
    <location>
        <begin position="314"/>
        <end position="320"/>
    </location>
</feature>
<feature type="strand" evidence="15">
    <location>
        <begin position="330"/>
        <end position="334"/>
    </location>
</feature>
<feature type="strand" evidence="15">
    <location>
        <begin position="348"/>
        <end position="350"/>
    </location>
</feature>
<feature type="strand" evidence="15">
    <location>
        <begin position="353"/>
        <end position="359"/>
    </location>
</feature>
<feature type="strand" evidence="15">
    <location>
        <begin position="362"/>
        <end position="373"/>
    </location>
</feature>
<feature type="strand" evidence="15">
    <location>
        <begin position="382"/>
        <end position="385"/>
    </location>
</feature>
<feature type="strand" evidence="15">
    <location>
        <begin position="395"/>
        <end position="402"/>
    </location>
</feature>
<feature type="helix" evidence="15">
    <location>
        <begin position="403"/>
        <end position="405"/>
    </location>
</feature>
<feature type="turn" evidence="15">
    <location>
        <begin position="406"/>
        <end position="408"/>
    </location>
</feature>
<feature type="strand" evidence="15">
    <location>
        <begin position="410"/>
        <end position="422"/>
    </location>
</feature>
<feature type="helix" evidence="15">
    <location>
        <begin position="427"/>
        <end position="429"/>
    </location>
</feature>
<feature type="strand" evidence="15">
    <location>
        <begin position="431"/>
        <end position="439"/>
    </location>
</feature>
<feature type="helix" evidence="15">
    <location>
        <begin position="443"/>
        <end position="446"/>
    </location>
</feature>
<feature type="strand" evidence="15">
    <location>
        <begin position="453"/>
        <end position="458"/>
    </location>
</feature>
<feature type="strand" evidence="15">
    <location>
        <begin position="461"/>
        <end position="465"/>
    </location>
</feature>
<feature type="helix" evidence="15">
    <location>
        <begin position="470"/>
        <end position="473"/>
    </location>
</feature>
<feature type="turn" evidence="15">
    <location>
        <begin position="475"/>
        <end position="477"/>
    </location>
</feature>
<feature type="strand" evidence="15">
    <location>
        <begin position="478"/>
        <end position="487"/>
    </location>
</feature>
<feature type="turn" evidence="15">
    <location>
        <begin position="488"/>
        <end position="490"/>
    </location>
</feature>
<feature type="strand" evidence="15">
    <location>
        <begin position="493"/>
        <end position="498"/>
    </location>
</feature>
<feature type="strand" evidence="15">
    <location>
        <begin position="504"/>
        <end position="507"/>
    </location>
</feature>
<feature type="strand" evidence="15">
    <location>
        <begin position="515"/>
        <end position="526"/>
    </location>
</feature>
<feature type="strand" evidence="15">
    <location>
        <begin position="535"/>
        <end position="538"/>
    </location>
</feature>
<sequence length="662" mass="73109">MEPLVTWVVPLLFLFLLSRQGAACRTSECCFQDPPYPDADSGSASGPRDLRCYRISSDRYECSWQYEGPTAGVSHFLRCCLSSGRCCYFAAGSATRLQFSDQAGVSVLYTVTLWVESWARNQTEKSPEVTLQLYNSVKYEPPLGDIKVSKLAGQLRMEWETPDNQVGAEVQFRHRTPSSPWKLGDCGPQDDDTESCLCPLEMNVAQEFQLRRRQLGSQGSSWSKWSSPVCVPPENPPQPQVRFSVEQLGQDGRRRLTLKEQPTQLELPEGCQGLAPGTEVTYRLQLHMLSCPCKAKATRTLHLGKMPYLSGAAYNVAVISSNQFGPGLNQTWHIPADTHTEPVALNISVGTNGTTMYWPARAQSMTYCIEWQPVGQDGGLATCSLTAPQDPDPAGMATYSWSRESGAMGQEKCYYITIFASAHPEKLTLWSTVLSTYHFGGNASAAGTPHHVSVKNHSLDSVSVDWAPSLLSTCPGVLKEYVVRCRDEDSKQVSEHPVQPTETQVTLSGLRAGVAYTVQVRADTAWLRGVWSQPQRFSIEVQVSDWLIFFASLGSFLSILLVGVLGYLGLNRAARHLCPPLPTPCASSAIEFPGGKETWQWINPVDFQEEASLQEALVVEMSWDKGERTEPLEKTELPEGAPELALDTELSLEDGDRCKAKM</sequence>
<protein>
    <recommendedName>
        <fullName>Interleukin-12 receptor subunit beta-1</fullName>
        <shortName>IL-12 receptor subunit beta-1</shortName>
        <shortName>IL-12R subunit beta-1</shortName>
        <shortName>IL-12R-beta-1</shortName>
        <shortName>IL-12RB1</shortName>
    </recommendedName>
    <alternativeName>
        <fullName>IL-12 receptor beta component</fullName>
    </alternativeName>
    <cdAntigenName>CD212</cdAntigenName>
</protein>
<reference key="1">
    <citation type="journal article" date="1994" name="J. Immunol.">
        <title>Expression cloning of a human IL-12 receptor component. A new member of the cytokine receptor superfamily with strong homology to gp130.</title>
        <authorList>
            <person name="Chua A.O."/>
            <person name="Chizzonite R."/>
            <person name="Desai B.B."/>
            <person name="Truitt T.P."/>
            <person name="Nunes P."/>
            <person name="Minetti L.J."/>
            <person name="Warrier R.R."/>
            <person name="Presky D.H."/>
            <person name="Levine J.F."/>
            <person name="Gately M.K."/>
            <person name="Gubler U."/>
        </authorList>
    </citation>
    <scope>NUCLEOTIDE SEQUENCE [MRNA] (ISOFORMS 1 AND 2)</scope>
</reference>
<reference key="2">
    <citation type="submission" date="2000-09" db="EMBL/GenBank/DDBJ databases">
        <title>Genomic structure of IL12RB1 gene.</title>
        <authorList>
            <person name="Elloumi-Zghal H."/>
            <person name="Abdelhak S."/>
            <person name="Dellagi K."/>
        </authorList>
    </citation>
    <scope>NUCLEOTIDE SEQUENCE [GENOMIC DNA]</scope>
</reference>
<reference key="3">
    <citation type="submission" date="2004-10" db="EMBL/GenBank/DDBJ databases">
        <authorList>
            <consortium name="SeattleSNPs variation discovery resource"/>
        </authorList>
    </citation>
    <scope>NUCLEOTIDE SEQUENCE [GENOMIC DNA]</scope>
    <scope>VARIANTS GLN-3; SER-47; HIS-156; ARG-214; GLN-339; THR-365 AND ARG-378</scope>
</reference>
<reference key="4">
    <citation type="journal article" date="2004" name="Nat. Genet.">
        <title>Complete sequencing and characterization of 21,243 full-length human cDNAs.</title>
        <authorList>
            <person name="Ota T."/>
            <person name="Suzuki Y."/>
            <person name="Nishikawa T."/>
            <person name="Otsuki T."/>
            <person name="Sugiyama T."/>
            <person name="Irie R."/>
            <person name="Wakamatsu A."/>
            <person name="Hayashi K."/>
            <person name="Sato H."/>
            <person name="Nagai K."/>
            <person name="Kimura K."/>
            <person name="Makita H."/>
            <person name="Sekine M."/>
            <person name="Obayashi M."/>
            <person name="Nishi T."/>
            <person name="Shibahara T."/>
            <person name="Tanaka T."/>
            <person name="Ishii S."/>
            <person name="Yamamoto J."/>
            <person name="Saito K."/>
            <person name="Kawai Y."/>
            <person name="Isono Y."/>
            <person name="Nakamura Y."/>
            <person name="Nagahari K."/>
            <person name="Murakami K."/>
            <person name="Yasuda T."/>
            <person name="Iwayanagi T."/>
            <person name="Wagatsuma M."/>
            <person name="Shiratori A."/>
            <person name="Sudo H."/>
            <person name="Hosoiri T."/>
            <person name="Kaku Y."/>
            <person name="Kodaira H."/>
            <person name="Kondo H."/>
            <person name="Sugawara M."/>
            <person name="Takahashi M."/>
            <person name="Kanda K."/>
            <person name="Yokoi T."/>
            <person name="Furuya T."/>
            <person name="Kikkawa E."/>
            <person name="Omura Y."/>
            <person name="Abe K."/>
            <person name="Kamihara K."/>
            <person name="Katsuta N."/>
            <person name="Sato K."/>
            <person name="Tanikawa M."/>
            <person name="Yamazaki M."/>
            <person name="Ninomiya K."/>
            <person name="Ishibashi T."/>
            <person name="Yamashita H."/>
            <person name="Murakawa K."/>
            <person name="Fujimori K."/>
            <person name="Tanai H."/>
            <person name="Kimata M."/>
            <person name="Watanabe M."/>
            <person name="Hiraoka S."/>
            <person name="Chiba Y."/>
            <person name="Ishida S."/>
            <person name="Ono Y."/>
            <person name="Takiguchi S."/>
            <person name="Watanabe S."/>
            <person name="Yosida M."/>
            <person name="Hotuta T."/>
            <person name="Kusano J."/>
            <person name="Kanehori K."/>
            <person name="Takahashi-Fujii A."/>
            <person name="Hara H."/>
            <person name="Tanase T.-O."/>
            <person name="Nomura Y."/>
            <person name="Togiya S."/>
            <person name="Komai F."/>
            <person name="Hara R."/>
            <person name="Takeuchi K."/>
            <person name="Arita M."/>
            <person name="Imose N."/>
            <person name="Musashino K."/>
            <person name="Yuuki H."/>
            <person name="Oshima A."/>
            <person name="Sasaki N."/>
            <person name="Aotsuka S."/>
            <person name="Yoshikawa Y."/>
            <person name="Matsunawa H."/>
            <person name="Ichihara T."/>
            <person name="Shiohata N."/>
            <person name="Sano S."/>
            <person name="Moriya S."/>
            <person name="Momiyama H."/>
            <person name="Satoh N."/>
            <person name="Takami S."/>
            <person name="Terashima Y."/>
            <person name="Suzuki O."/>
            <person name="Nakagawa S."/>
            <person name="Senoh A."/>
            <person name="Mizoguchi H."/>
            <person name="Goto Y."/>
            <person name="Shimizu F."/>
            <person name="Wakebe H."/>
            <person name="Hishigaki H."/>
            <person name="Watanabe T."/>
            <person name="Sugiyama A."/>
            <person name="Takemoto M."/>
            <person name="Kawakami B."/>
            <person name="Yamazaki M."/>
            <person name="Watanabe K."/>
            <person name="Kumagai A."/>
            <person name="Itakura S."/>
            <person name="Fukuzumi Y."/>
            <person name="Fujimori Y."/>
            <person name="Komiyama M."/>
            <person name="Tashiro H."/>
            <person name="Tanigami A."/>
            <person name="Fujiwara T."/>
            <person name="Ono T."/>
            <person name="Yamada K."/>
            <person name="Fujii Y."/>
            <person name="Ozaki K."/>
            <person name="Hirao M."/>
            <person name="Ohmori Y."/>
            <person name="Kawabata A."/>
            <person name="Hikiji T."/>
            <person name="Kobatake N."/>
            <person name="Inagaki H."/>
            <person name="Ikema Y."/>
            <person name="Okamoto S."/>
            <person name="Okitani R."/>
            <person name="Kawakami T."/>
            <person name="Noguchi S."/>
            <person name="Itoh T."/>
            <person name="Shigeta K."/>
            <person name="Senba T."/>
            <person name="Matsumura K."/>
            <person name="Nakajima Y."/>
            <person name="Mizuno T."/>
            <person name="Morinaga M."/>
            <person name="Sasaki M."/>
            <person name="Togashi T."/>
            <person name="Oyama M."/>
            <person name="Hata H."/>
            <person name="Watanabe M."/>
            <person name="Komatsu T."/>
            <person name="Mizushima-Sugano J."/>
            <person name="Satoh T."/>
            <person name="Shirai Y."/>
            <person name="Takahashi Y."/>
            <person name="Nakagawa K."/>
            <person name="Okumura K."/>
            <person name="Nagase T."/>
            <person name="Nomura N."/>
            <person name="Kikuchi H."/>
            <person name="Masuho Y."/>
            <person name="Yamashita R."/>
            <person name="Nakai K."/>
            <person name="Yada T."/>
            <person name="Nakamura Y."/>
            <person name="Ohara O."/>
            <person name="Isogai T."/>
            <person name="Sugano S."/>
        </authorList>
    </citation>
    <scope>NUCLEOTIDE SEQUENCE [LARGE SCALE MRNA] (ISOFORM 3)</scope>
    <source>
        <tissue>Umbilical cord blood</tissue>
    </source>
</reference>
<reference key="5">
    <citation type="journal article" date="2004" name="Nature">
        <title>The DNA sequence and biology of human chromosome 19.</title>
        <authorList>
            <person name="Grimwood J."/>
            <person name="Gordon L.A."/>
            <person name="Olsen A.S."/>
            <person name="Terry A."/>
            <person name="Schmutz J."/>
            <person name="Lamerdin J.E."/>
            <person name="Hellsten U."/>
            <person name="Goodstein D."/>
            <person name="Couronne O."/>
            <person name="Tran-Gyamfi M."/>
            <person name="Aerts A."/>
            <person name="Altherr M."/>
            <person name="Ashworth L."/>
            <person name="Bajorek E."/>
            <person name="Black S."/>
            <person name="Branscomb E."/>
            <person name="Caenepeel S."/>
            <person name="Carrano A.V."/>
            <person name="Caoile C."/>
            <person name="Chan Y.M."/>
            <person name="Christensen M."/>
            <person name="Cleland C.A."/>
            <person name="Copeland A."/>
            <person name="Dalin E."/>
            <person name="Dehal P."/>
            <person name="Denys M."/>
            <person name="Detter J.C."/>
            <person name="Escobar J."/>
            <person name="Flowers D."/>
            <person name="Fotopulos D."/>
            <person name="Garcia C."/>
            <person name="Georgescu A.M."/>
            <person name="Glavina T."/>
            <person name="Gomez M."/>
            <person name="Gonzales E."/>
            <person name="Groza M."/>
            <person name="Hammon N."/>
            <person name="Hawkins T."/>
            <person name="Haydu L."/>
            <person name="Ho I."/>
            <person name="Huang W."/>
            <person name="Israni S."/>
            <person name="Jett J."/>
            <person name="Kadner K."/>
            <person name="Kimball H."/>
            <person name="Kobayashi A."/>
            <person name="Larionov V."/>
            <person name="Leem S.-H."/>
            <person name="Lopez F."/>
            <person name="Lou Y."/>
            <person name="Lowry S."/>
            <person name="Malfatti S."/>
            <person name="Martinez D."/>
            <person name="McCready P.M."/>
            <person name="Medina C."/>
            <person name="Morgan J."/>
            <person name="Nelson K."/>
            <person name="Nolan M."/>
            <person name="Ovcharenko I."/>
            <person name="Pitluck S."/>
            <person name="Pollard M."/>
            <person name="Popkie A.P."/>
            <person name="Predki P."/>
            <person name="Quan G."/>
            <person name="Ramirez L."/>
            <person name="Rash S."/>
            <person name="Retterer J."/>
            <person name="Rodriguez A."/>
            <person name="Rogers S."/>
            <person name="Salamov A."/>
            <person name="Salazar A."/>
            <person name="She X."/>
            <person name="Smith D."/>
            <person name="Slezak T."/>
            <person name="Solovyev V."/>
            <person name="Thayer N."/>
            <person name="Tice H."/>
            <person name="Tsai M."/>
            <person name="Ustaszewska A."/>
            <person name="Vo N."/>
            <person name="Wagner M."/>
            <person name="Wheeler J."/>
            <person name="Wu K."/>
            <person name="Xie G."/>
            <person name="Yang J."/>
            <person name="Dubchak I."/>
            <person name="Furey T.S."/>
            <person name="DeJong P."/>
            <person name="Dickson M."/>
            <person name="Gordon D."/>
            <person name="Eichler E.E."/>
            <person name="Pennacchio L.A."/>
            <person name="Richardson P."/>
            <person name="Stubbs L."/>
            <person name="Rokhsar D.S."/>
            <person name="Myers R.M."/>
            <person name="Rubin E.M."/>
            <person name="Lucas S.M."/>
        </authorList>
    </citation>
    <scope>NUCLEOTIDE SEQUENCE [LARGE SCALE GENOMIC DNA]</scope>
</reference>
<reference key="6">
    <citation type="submission" date="2005-07" db="EMBL/GenBank/DDBJ databases">
        <authorList>
            <person name="Mural R.J."/>
            <person name="Istrail S."/>
            <person name="Sutton G.G."/>
            <person name="Florea L."/>
            <person name="Halpern A.L."/>
            <person name="Mobarry C.M."/>
            <person name="Lippert R."/>
            <person name="Walenz B."/>
            <person name="Shatkay H."/>
            <person name="Dew I."/>
            <person name="Miller J.R."/>
            <person name="Flanigan M.J."/>
            <person name="Edwards N.J."/>
            <person name="Bolanos R."/>
            <person name="Fasulo D."/>
            <person name="Halldorsson B.V."/>
            <person name="Hannenhalli S."/>
            <person name="Turner R."/>
            <person name="Yooseph S."/>
            <person name="Lu F."/>
            <person name="Nusskern D.R."/>
            <person name="Shue B.C."/>
            <person name="Zheng X.H."/>
            <person name="Zhong F."/>
            <person name="Delcher A.L."/>
            <person name="Huson D.H."/>
            <person name="Kravitz S.A."/>
            <person name="Mouchard L."/>
            <person name="Reinert K."/>
            <person name="Remington K.A."/>
            <person name="Clark A.G."/>
            <person name="Waterman M.S."/>
            <person name="Eichler E.E."/>
            <person name="Adams M.D."/>
            <person name="Hunkapiller M.W."/>
            <person name="Myers E.W."/>
            <person name="Venter J.C."/>
        </authorList>
    </citation>
    <scope>NUCLEOTIDE SEQUENCE [LARGE SCALE GENOMIC DNA]</scope>
</reference>
<reference key="7">
    <citation type="journal article" date="2004" name="Genome Res.">
        <title>The status, quality, and expansion of the NIH full-length cDNA project: the Mammalian Gene Collection (MGC).</title>
        <authorList>
            <consortium name="The MGC Project Team"/>
        </authorList>
    </citation>
    <scope>NUCLEOTIDE SEQUENCE [LARGE SCALE MRNA] (ISOFORMS 1; 2 AND 3)</scope>
    <scope>VARIANT ARG-214</scope>
    <source>
        <tissue>Colon</tissue>
        <tissue>Testis</tissue>
    </source>
</reference>
<reference key="8">
    <citation type="journal article" date="1996" name="Proc. Natl. Acad. Sci. U.S.A.">
        <title>A functional interleukin 12 receptor complex is composed of two beta-type cytokine receptor subunits.</title>
        <authorList>
            <person name="Presky D.H."/>
            <person name="Yang H."/>
            <person name="Minetti L.J."/>
            <person name="Chua A.O."/>
            <person name="Nabavi N."/>
            <person name="Wu C.-Y."/>
            <person name="Gately M.K."/>
            <person name="Gubler U."/>
        </authorList>
    </citation>
    <scope>SUBUNIT</scope>
</reference>
<reference key="9">
    <citation type="journal article" date="2002" name="J. Immunol.">
        <title>A receptor for the heterodimeric cytokine IL-23 is composed of IL-12Rbeta1 and a novel cytokine receptor subunit, IL-23R.</title>
        <authorList>
            <person name="Parham C."/>
            <person name="Chirica M."/>
            <person name="Timans J."/>
            <person name="Vaisberg E."/>
            <person name="Travis M."/>
            <person name="Cheung J."/>
            <person name="Pflanz S."/>
            <person name="Zhang R."/>
            <person name="Singh K.P."/>
            <person name="Vega F."/>
            <person name="To W."/>
            <person name="Wagner J."/>
            <person name="O'Farrell A.-M."/>
            <person name="McClanahan T.K."/>
            <person name="Zurawski S."/>
            <person name="Hannum C."/>
            <person name="Gorman D."/>
            <person name="Rennick D.M."/>
            <person name="Kastelein R.A."/>
            <person name="de Waal Malefyt R."/>
            <person name="Moore K.W."/>
        </authorList>
    </citation>
    <scope>FUNCTION</scope>
    <scope>INTERACTION WITH IL23R</scope>
</reference>
<reference key="10">
    <citation type="journal article" date="2001" name="J. Infect. Dis.">
        <title>Interleukin-12 receptor beta-1 deficiency in a patient with abdominal tuberculosis.</title>
        <authorList>
            <person name="Altare F."/>
            <person name="Ensser A."/>
            <person name="Breiman A."/>
            <person name="Reichenbach J."/>
            <person name="El Baghdadi J."/>
            <person name="Fischer A."/>
            <person name="Emile J.-F."/>
            <person name="Gaillard J.-L."/>
            <person name="Meinl E."/>
            <person name="Casanova J.-L."/>
        </authorList>
    </citation>
    <scope>VARIANT IMD30 TRP-213</scope>
</reference>
<proteinExistence type="evidence at protein level"/>
<dbReference type="EMBL" id="U03187">
    <property type="protein sequence ID" value="AAA21340.1"/>
    <property type="molecule type" value="mRNA"/>
</dbReference>
<dbReference type="EMBL" id="AJ297688">
    <property type="protein sequence ID" value="CAC10446.1"/>
    <property type="molecule type" value="Genomic_DNA"/>
</dbReference>
<dbReference type="EMBL" id="AJ297689">
    <property type="protein sequence ID" value="CAC10446.1"/>
    <property type="status" value="JOINED"/>
    <property type="molecule type" value="Genomic_DNA"/>
</dbReference>
<dbReference type="EMBL" id="AJ297690">
    <property type="protein sequence ID" value="CAC10446.1"/>
    <property type="status" value="JOINED"/>
    <property type="molecule type" value="Genomic_DNA"/>
</dbReference>
<dbReference type="EMBL" id="AJ297691">
    <property type="protein sequence ID" value="CAC10446.1"/>
    <property type="status" value="JOINED"/>
    <property type="molecule type" value="Genomic_DNA"/>
</dbReference>
<dbReference type="EMBL" id="AJ297692">
    <property type="protein sequence ID" value="CAC10446.1"/>
    <property type="status" value="JOINED"/>
    <property type="molecule type" value="Genomic_DNA"/>
</dbReference>
<dbReference type="EMBL" id="AJ297693">
    <property type="protein sequence ID" value="CAC10446.1"/>
    <property type="status" value="JOINED"/>
    <property type="molecule type" value="Genomic_DNA"/>
</dbReference>
<dbReference type="EMBL" id="AJ297694">
    <property type="protein sequence ID" value="CAC10446.1"/>
    <property type="status" value="JOINED"/>
    <property type="molecule type" value="Genomic_DNA"/>
</dbReference>
<dbReference type="EMBL" id="AJ297695">
    <property type="protein sequence ID" value="CAC10446.1"/>
    <property type="status" value="JOINED"/>
    <property type="molecule type" value="Genomic_DNA"/>
</dbReference>
<dbReference type="EMBL" id="AJ297696">
    <property type="protein sequence ID" value="CAC10446.1"/>
    <property type="status" value="JOINED"/>
    <property type="molecule type" value="Genomic_DNA"/>
</dbReference>
<dbReference type="EMBL" id="AJ297697">
    <property type="protein sequence ID" value="CAC10446.1"/>
    <property type="status" value="JOINED"/>
    <property type="molecule type" value="Genomic_DNA"/>
</dbReference>
<dbReference type="EMBL" id="AJ297698">
    <property type="protein sequence ID" value="CAC10446.1"/>
    <property type="status" value="JOINED"/>
    <property type="molecule type" value="Genomic_DNA"/>
</dbReference>
<dbReference type="EMBL" id="AJ297699">
    <property type="protein sequence ID" value="CAC10446.1"/>
    <property type="status" value="JOINED"/>
    <property type="molecule type" value="Genomic_DNA"/>
</dbReference>
<dbReference type="EMBL" id="AJ297700">
    <property type="protein sequence ID" value="CAC10446.1"/>
    <property type="status" value="JOINED"/>
    <property type="molecule type" value="Genomic_DNA"/>
</dbReference>
<dbReference type="EMBL" id="AJ297701">
    <property type="protein sequence ID" value="CAC10446.1"/>
    <property type="status" value="JOINED"/>
    <property type="molecule type" value="Genomic_DNA"/>
</dbReference>
<dbReference type="EMBL" id="AY771996">
    <property type="protein sequence ID" value="AAV28734.1"/>
    <property type="molecule type" value="Genomic_DNA"/>
</dbReference>
<dbReference type="EMBL" id="AK290423">
    <property type="protein sequence ID" value="BAF83112.1"/>
    <property type="molecule type" value="mRNA"/>
</dbReference>
<dbReference type="EMBL" id="AC020904">
    <property type="status" value="NOT_ANNOTATED_CDS"/>
    <property type="molecule type" value="Genomic_DNA"/>
</dbReference>
<dbReference type="EMBL" id="CH471106">
    <property type="protein sequence ID" value="EAW84656.1"/>
    <property type="molecule type" value="Genomic_DNA"/>
</dbReference>
<dbReference type="EMBL" id="BC029121">
    <property type="protein sequence ID" value="AAH29121.1"/>
    <property type="molecule type" value="mRNA"/>
</dbReference>
<dbReference type="EMBL" id="BC137404">
    <property type="protein sequence ID" value="AAI37405.1"/>
    <property type="molecule type" value="mRNA"/>
</dbReference>
<dbReference type="EMBL" id="BC137406">
    <property type="protein sequence ID" value="AAI37407.1"/>
    <property type="molecule type" value="mRNA"/>
</dbReference>
<dbReference type="CCDS" id="CCDS32957.1">
    <molecule id="P42701-3"/>
</dbReference>
<dbReference type="CCDS" id="CCDS54232.1">
    <molecule id="P42701-1"/>
</dbReference>
<dbReference type="PIR" id="I37892">
    <property type="entry name" value="I37892"/>
</dbReference>
<dbReference type="RefSeq" id="NP_001276952.1">
    <molecule id="P42701-2"/>
    <property type="nucleotide sequence ID" value="NM_001290023.2"/>
</dbReference>
<dbReference type="RefSeq" id="NP_005526.1">
    <molecule id="P42701-1"/>
    <property type="nucleotide sequence ID" value="NM_005535.3"/>
</dbReference>
<dbReference type="RefSeq" id="NP_714912.1">
    <molecule id="P42701-3"/>
    <property type="nucleotide sequence ID" value="NM_153701.3"/>
</dbReference>
<dbReference type="PDB" id="6WDP">
    <property type="method" value="X-ray"/>
    <property type="resolution" value="2.01 A"/>
    <property type="chains" value="A=27-239"/>
</dbReference>
<dbReference type="PDB" id="6WDQ">
    <property type="method" value="X-ray"/>
    <property type="resolution" value="3.40 A"/>
    <property type="chains" value="D=27-239"/>
</dbReference>
<dbReference type="PDB" id="8C7M">
    <property type="method" value="X-ray"/>
    <property type="resolution" value="2.56 A"/>
    <property type="chains" value="A/B=232-540"/>
</dbReference>
<dbReference type="PDB" id="8ODX">
    <property type="method" value="X-ray"/>
    <property type="resolution" value="4.40 A"/>
    <property type="chains" value="A=232-540"/>
</dbReference>
<dbReference type="PDB" id="8OE4">
    <property type="method" value="EM"/>
    <property type="resolution" value="3.60 A"/>
    <property type="chains" value="D=24-540"/>
</dbReference>
<dbReference type="PDB" id="8XRP">
    <property type="method" value="EM"/>
    <property type="resolution" value="3.75 A"/>
    <property type="chains" value="D/H/L/P=24-236"/>
</dbReference>
<dbReference type="PDB" id="8YI7">
    <property type="method" value="EM"/>
    <property type="resolution" value="3.57 A"/>
    <property type="chains" value="D=24-236"/>
</dbReference>
<dbReference type="PDBsum" id="6WDP"/>
<dbReference type="PDBsum" id="6WDQ"/>
<dbReference type="PDBsum" id="8C7M"/>
<dbReference type="PDBsum" id="8ODX"/>
<dbReference type="PDBsum" id="8OE4"/>
<dbReference type="PDBsum" id="8XRP"/>
<dbReference type="PDBsum" id="8YI7"/>
<dbReference type="EMDB" id="EMD-21645"/>
<dbReference type="EMDB" id="EMD-21646"/>
<dbReference type="EMDB" id="EMD-38609"/>
<dbReference type="EMDB" id="EMD-39311"/>
<dbReference type="SMR" id="P42701"/>
<dbReference type="BioGRID" id="109808">
    <property type="interactions" value="110"/>
</dbReference>
<dbReference type="ComplexPortal" id="CPX-382">
    <property type="entry name" value="Interleukin-12-receptor ligand complex"/>
</dbReference>
<dbReference type="ComplexPortal" id="CPX-383">
    <property type="entry name" value="Interleukin-23 receptor-ligand complex"/>
</dbReference>
<dbReference type="CORUM" id="P42701"/>
<dbReference type="DIP" id="DIP-3773N"/>
<dbReference type="FunCoup" id="P42701">
    <property type="interactions" value="451"/>
</dbReference>
<dbReference type="IntAct" id="P42701">
    <property type="interactions" value="76"/>
</dbReference>
<dbReference type="MINT" id="P42701"/>
<dbReference type="STRING" id="9606.ENSP00000470788"/>
<dbReference type="ChEMBL" id="CHEMBL4523226"/>
<dbReference type="GlyCosmos" id="P42701">
    <property type="glycosylation" value="6 sites, No reported glycans"/>
</dbReference>
<dbReference type="GlyGen" id="P42701">
    <property type="glycosylation" value="8 sites"/>
</dbReference>
<dbReference type="iPTMnet" id="P42701"/>
<dbReference type="PhosphoSitePlus" id="P42701"/>
<dbReference type="BioMuta" id="IL12RB1"/>
<dbReference type="DMDM" id="1170462"/>
<dbReference type="MassIVE" id="P42701"/>
<dbReference type="PaxDb" id="9606-ENSP00000470788"/>
<dbReference type="PeptideAtlas" id="P42701"/>
<dbReference type="ProteomicsDB" id="55543">
    <molecule id="P42701-1"/>
</dbReference>
<dbReference type="ProteomicsDB" id="55544">
    <molecule id="P42701-2"/>
</dbReference>
<dbReference type="ABCD" id="P42701">
    <property type="antibodies" value="2 sequenced antibodies"/>
</dbReference>
<dbReference type="Antibodypedia" id="14966">
    <property type="antibodies" value="518 antibodies from 39 providers"/>
</dbReference>
<dbReference type="DNASU" id="3594"/>
<dbReference type="Ensembl" id="ENST00000322153.11">
    <molecule id="P42701-3"/>
    <property type="protein sequence ID" value="ENSP00000314425.5"/>
    <property type="gene ID" value="ENSG00000096996.16"/>
</dbReference>
<dbReference type="Ensembl" id="ENST00000593993.7">
    <molecule id="P42701-1"/>
    <property type="protein sequence ID" value="ENSP00000472165.2"/>
    <property type="gene ID" value="ENSG00000096996.16"/>
</dbReference>
<dbReference type="Ensembl" id="ENST00000600835.6">
    <molecule id="P42701-1"/>
    <property type="protein sequence ID" value="ENSP00000470788.1"/>
    <property type="gene ID" value="ENSG00000096996.16"/>
</dbReference>
<dbReference type="GeneID" id="3594"/>
<dbReference type="KEGG" id="hsa:3594"/>
<dbReference type="MANE-Select" id="ENST00000593993.7">
    <property type="protein sequence ID" value="ENSP00000472165.2"/>
    <property type="RefSeq nucleotide sequence ID" value="NM_005535.3"/>
    <property type="RefSeq protein sequence ID" value="NP_005526.1"/>
</dbReference>
<dbReference type="UCSC" id="uc002nhw.2">
    <molecule id="P42701-1"/>
    <property type="organism name" value="human"/>
</dbReference>
<dbReference type="AGR" id="HGNC:5971"/>
<dbReference type="CTD" id="3594"/>
<dbReference type="DisGeNET" id="3594"/>
<dbReference type="GeneCards" id="IL12RB1"/>
<dbReference type="HGNC" id="HGNC:5971">
    <property type="gene designation" value="IL12RB1"/>
</dbReference>
<dbReference type="HPA" id="ENSG00000096996">
    <property type="expression patterns" value="Tissue enhanced (lymphoid)"/>
</dbReference>
<dbReference type="MalaCards" id="IL12RB1"/>
<dbReference type="MIM" id="601604">
    <property type="type" value="gene"/>
</dbReference>
<dbReference type="MIM" id="614891">
    <property type="type" value="phenotype"/>
</dbReference>
<dbReference type="neXtProt" id="NX_P42701"/>
<dbReference type="OpenTargets" id="ENSG00000096996"/>
<dbReference type="Orphanet" id="319552">
    <property type="disease" value="Mendelian susceptibility to mycobacterial diseases due to complete IL12RB1 deficiency"/>
</dbReference>
<dbReference type="Orphanet" id="186">
    <property type="disease" value="Primary biliary cholangitis"/>
</dbReference>
<dbReference type="PharmGKB" id="PA29786"/>
<dbReference type="VEuPathDB" id="HostDB:ENSG00000096996"/>
<dbReference type="eggNOG" id="ENOG502S2KP">
    <property type="taxonomic scope" value="Eukaryota"/>
</dbReference>
<dbReference type="GeneTree" id="ENSGT00390000012431"/>
<dbReference type="HOGENOM" id="CLU_031440_0_0_1"/>
<dbReference type="InParanoid" id="P42701"/>
<dbReference type="OMA" id="ECSWEYE"/>
<dbReference type="OrthoDB" id="8945484at2759"/>
<dbReference type="PAN-GO" id="P42701">
    <property type="GO annotations" value="9 GO annotations based on evolutionary models"/>
</dbReference>
<dbReference type="PhylomeDB" id="P42701"/>
<dbReference type="TreeFam" id="TF338613"/>
<dbReference type="PathwayCommons" id="P42701"/>
<dbReference type="Reactome" id="R-HSA-9020591">
    <property type="pathway name" value="Interleukin-12 signaling"/>
</dbReference>
<dbReference type="Reactome" id="R-HSA-9020933">
    <property type="pathway name" value="Interleukin-23 signaling"/>
</dbReference>
<dbReference type="SignaLink" id="P42701"/>
<dbReference type="SIGNOR" id="P42701"/>
<dbReference type="BioGRID-ORCS" id="3594">
    <property type="hits" value="24 hits in 1139 CRISPR screens"/>
</dbReference>
<dbReference type="ChiTaRS" id="IL12RB1">
    <property type="organism name" value="human"/>
</dbReference>
<dbReference type="GeneWiki" id="Interleukin_12_receptor,_beta_1_subunit"/>
<dbReference type="GenomeRNAi" id="3594"/>
<dbReference type="Pharos" id="P42701">
    <property type="development level" value="Tbio"/>
</dbReference>
<dbReference type="PRO" id="PR:P42701"/>
<dbReference type="Proteomes" id="UP000005640">
    <property type="component" value="Chromosome 19"/>
</dbReference>
<dbReference type="RNAct" id="P42701">
    <property type="molecule type" value="protein"/>
</dbReference>
<dbReference type="Bgee" id="ENSG00000096996">
    <property type="expression patterns" value="Expressed in granulocyte and 125 other cell types or tissues"/>
</dbReference>
<dbReference type="ExpressionAtlas" id="P42701">
    <property type="expression patterns" value="baseline and differential"/>
</dbReference>
<dbReference type="GO" id="GO:0009897">
    <property type="term" value="C:external side of plasma membrane"/>
    <property type="evidence" value="ECO:0000318"/>
    <property type="project" value="GO_Central"/>
</dbReference>
<dbReference type="GO" id="GO:0042022">
    <property type="term" value="C:interleukin-12 receptor complex"/>
    <property type="evidence" value="ECO:0000314"/>
    <property type="project" value="BHF-UCL"/>
</dbReference>
<dbReference type="GO" id="GO:0072536">
    <property type="term" value="C:interleukin-23 receptor complex"/>
    <property type="evidence" value="ECO:0000314"/>
    <property type="project" value="BHF-UCL"/>
</dbReference>
<dbReference type="GO" id="GO:0005886">
    <property type="term" value="C:plasma membrane"/>
    <property type="evidence" value="ECO:0000304"/>
    <property type="project" value="Reactome"/>
</dbReference>
<dbReference type="GO" id="GO:0043235">
    <property type="term" value="C:receptor complex"/>
    <property type="evidence" value="ECO:0000318"/>
    <property type="project" value="GO_Central"/>
</dbReference>
<dbReference type="GO" id="GO:0015026">
    <property type="term" value="F:coreceptor activity"/>
    <property type="evidence" value="ECO:0000314"/>
    <property type="project" value="UniProt"/>
</dbReference>
<dbReference type="GO" id="GO:0019955">
    <property type="term" value="F:cytokine binding"/>
    <property type="evidence" value="ECO:0000318"/>
    <property type="project" value="GO_Central"/>
</dbReference>
<dbReference type="GO" id="GO:0004896">
    <property type="term" value="F:cytokine receptor activity"/>
    <property type="evidence" value="ECO:0000318"/>
    <property type="project" value="GO_Central"/>
</dbReference>
<dbReference type="GO" id="GO:0071346">
    <property type="term" value="P:cellular response to type II interferon"/>
    <property type="evidence" value="ECO:0000314"/>
    <property type="project" value="BHF-UCL"/>
</dbReference>
<dbReference type="GO" id="GO:0019221">
    <property type="term" value="P:cytokine-mediated signaling pathway"/>
    <property type="evidence" value="ECO:0000318"/>
    <property type="project" value="GO_Central"/>
</dbReference>
<dbReference type="GO" id="GO:0035722">
    <property type="term" value="P:interleukin-12-mediated signaling pathway"/>
    <property type="evidence" value="ECO:0000314"/>
    <property type="project" value="UniProt"/>
</dbReference>
<dbReference type="GO" id="GO:0038155">
    <property type="term" value="P:interleukin-23-mediated signaling pathway"/>
    <property type="evidence" value="ECO:0000314"/>
    <property type="project" value="UniProt"/>
</dbReference>
<dbReference type="GO" id="GO:0042104">
    <property type="term" value="P:positive regulation of activated T cell proliferation"/>
    <property type="evidence" value="ECO:0000314"/>
    <property type="project" value="BHF-UCL"/>
</dbReference>
<dbReference type="GO" id="GO:0008284">
    <property type="term" value="P:positive regulation of cell population proliferation"/>
    <property type="evidence" value="ECO:0000318"/>
    <property type="project" value="GO_Central"/>
</dbReference>
<dbReference type="GO" id="GO:0002230">
    <property type="term" value="P:positive regulation of defense response to virus by host"/>
    <property type="evidence" value="ECO:0000314"/>
    <property type="project" value="BHF-UCL"/>
</dbReference>
<dbReference type="GO" id="GO:0043382">
    <property type="term" value="P:positive regulation of memory T cell differentiation"/>
    <property type="evidence" value="ECO:0000250"/>
    <property type="project" value="BHF-UCL"/>
</dbReference>
<dbReference type="GO" id="GO:0001916">
    <property type="term" value="P:positive regulation of T cell mediated cytotoxicity"/>
    <property type="evidence" value="ECO:0000250"/>
    <property type="project" value="BHF-UCL"/>
</dbReference>
<dbReference type="GO" id="GO:0002827">
    <property type="term" value="P:positive regulation of T-helper 1 type immune response"/>
    <property type="evidence" value="ECO:0000314"/>
    <property type="project" value="BHF-UCL"/>
</dbReference>
<dbReference type="GO" id="GO:2000330">
    <property type="term" value="P:positive regulation of T-helper 17 cell lineage commitment"/>
    <property type="evidence" value="ECO:0000250"/>
    <property type="project" value="BHF-UCL"/>
</dbReference>
<dbReference type="GO" id="GO:2000318">
    <property type="term" value="P:positive regulation of T-helper 17 type immune response"/>
    <property type="evidence" value="ECO:0000250"/>
    <property type="project" value="BHF-UCL"/>
</dbReference>
<dbReference type="GO" id="GO:0032729">
    <property type="term" value="P:positive regulation of type II interferon production"/>
    <property type="evidence" value="ECO:0000314"/>
    <property type="project" value="BHF-UCL"/>
</dbReference>
<dbReference type="GO" id="GO:0007165">
    <property type="term" value="P:signal transduction"/>
    <property type="evidence" value="ECO:0000305"/>
    <property type="project" value="BHF-UCL"/>
</dbReference>
<dbReference type="CDD" id="cd00063">
    <property type="entry name" value="FN3"/>
    <property type="match status" value="1"/>
</dbReference>
<dbReference type="FunFam" id="2.60.40.10:FF:001613">
    <property type="entry name" value="Interleukin 12 receptor subunit beta 1"/>
    <property type="match status" value="1"/>
</dbReference>
<dbReference type="FunFam" id="2.60.40.10:FF:001717">
    <property type="entry name" value="Interleukin 12 receptor subunit beta 1"/>
    <property type="match status" value="1"/>
</dbReference>
<dbReference type="Gene3D" id="2.60.40.10">
    <property type="entry name" value="Immunoglobulins"/>
    <property type="match status" value="2"/>
</dbReference>
<dbReference type="InterPro" id="IPR003961">
    <property type="entry name" value="FN3_dom"/>
</dbReference>
<dbReference type="InterPro" id="IPR036116">
    <property type="entry name" value="FN3_sf"/>
</dbReference>
<dbReference type="InterPro" id="IPR003529">
    <property type="entry name" value="Hematopoietin_rcpt_Gp130_CS"/>
</dbReference>
<dbReference type="InterPro" id="IPR013783">
    <property type="entry name" value="Ig-like_fold"/>
</dbReference>
<dbReference type="PANTHER" id="PTHR23037">
    <property type="entry name" value="CYTOKINE RECEPTOR"/>
    <property type="match status" value="1"/>
</dbReference>
<dbReference type="PANTHER" id="PTHR23037:SF35">
    <property type="entry name" value="FIBRONECTIN TYPE-III DOMAIN-CONTAINING PROTEIN"/>
    <property type="match status" value="1"/>
</dbReference>
<dbReference type="Pfam" id="PF00041">
    <property type="entry name" value="fn3"/>
    <property type="match status" value="1"/>
</dbReference>
<dbReference type="SMART" id="SM00060">
    <property type="entry name" value="FN3"/>
    <property type="match status" value="1"/>
</dbReference>
<dbReference type="SUPFAM" id="SSF49265">
    <property type="entry name" value="Fibronectin type III"/>
    <property type="match status" value="1"/>
</dbReference>
<dbReference type="PROSITE" id="PS50853">
    <property type="entry name" value="FN3"/>
    <property type="match status" value="3"/>
</dbReference>
<dbReference type="PROSITE" id="PS01353">
    <property type="entry name" value="HEMATOPO_REC_L_F2"/>
    <property type="match status" value="1"/>
</dbReference>
<keyword id="KW-0002">3D-structure</keyword>
<keyword id="KW-0025">Alternative splicing</keyword>
<keyword id="KW-0225">Disease variant</keyword>
<keyword id="KW-1015">Disulfide bond</keyword>
<keyword id="KW-0325">Glycoprotein</keyword>
<keyword id="KW-0472">Membrane</keyword>
<keyword id="KW-1267">Proteomics identification</keyword>
<keyword id="KW-0675">Receptor</keyword>
<keyword id="KW-1185">Reference proteome</keyword>
<keyword id="KW-0677">Repeat</keyword>
<keyword id="KW-0732">Signal</keyword>
<keyword id="KW-0812">Transmembrane</keyword>
<keyword id="KW-1133">Transmembrane helix</keyword>
<accession>P42701</accession>
<accession>A8K308</accession>
<accession>B2RPF1</accession>
<accession>B7ZKK3</accession>
<accession>Q8N6Q7</accession>
<organism>
    <name type="scientific">Homo sapiens</name>
    <name type="common">Human</name>
    <dbReference type="NCBI Taxonomy" id="9606"/>
    <lineage>
        <taxon>Eukaryota</taxon>
        <taxon>Metazoa</taxon>
        <taxon>Chordata</taxon>
        <taxon>Craniata</taxon>
        <taxon>Vertebrata</taxon>
        <taxon>Euteleostomi</taxon>
        <taxon>Mammalia</taxon>
        <taxon>Eutheria</taxon>
        <taxon>Euarchontoglires</taxon>
        <taxon>Primates</taxon>
        <taxon>Haplorrhini</taxon>
        <taxon>Catarrhini</taxon>
        <taxon>Hominidae</taxon>
        <taxon>Homo</taxon>
    </lineage>
</organism>
<gene>
    <name type="primary">IL12RB1</name>
    <name type="synonym">IL12R</name>
    <name type="synonym">IL12RB</name>
</gene>
<name>I12R1_HUMAN</name>
<evidence type="ECO:0000250" key="1"/>
<evidence type="ECO:0000255" key="2"/>
<evidence type="ECO:0000255" key="3">
    <source>
        <dbReference type="PROSITE-ProRule" id="PRU00316"/>
    </source>
</evidence>
<evidence type="ECO:0000256" key="4">
    <source>
        <dbReference type="SAM" id="MobiDB-lite"/>
    </source>
</evidence>
<evidence type="ECO:0000269" key="5">
    <source>
    </source>
</evidence>
<evidence type="ECO:0000269" key="6">
    <source>
    </source>
</evidence>
<evidence type="ECO:0000269" key="7">
    <source>
    </source>
</evidence>
<evidence type="ECO:0000269" key="8">
    <source>
    </source>
</evidence>
<evidence type="ECO:0000269" key="9">
    <source ref="3"/>
</evidence>
<evidence type="ECO:0000303" key="10">
    <source>
    </source>
</evidence>
<evidence type="ECO:0000303" key="11">
    <source>
    </source>
</evidence>
<evidence type="ECO:0000303" key="12">
    <source>
    </source>
</evidence>
<evidence type="ECO:0000305" key="13"/>
<evidence type="ECO:0007829" key="14">
    <source>
        <dbReference type="PDB" id="6WDP"/>
    </source>
</evidence>
<evidence type="ECO:0007829" key="15">
    <source>
        <dbReference type="PDB" id="8C7M"/>
    </source>
</evidence>